<feature type="chain" id="PRO_1000022607" description="ATP-dependent Clp protease adapter protein ClpS">
    <location>
        <begin position="1"/>
        <end position="104"/>
    </location>
</feature>
<sequence length="104" mass="11677">MSNGPLAPGYDSDILVEDDVRLPRMYRVLLHNDDYTTMEFVVSILVEVFRKTAEQATAIMLAVHRDGVGECGVYTFEVAETKAAIVHARARREGYPLRCSTEEV</sequence>
<accession>A1VDN4</accession>
<organism>
    <name type="scientific">Nitratidesulfovibrio vulgaris (strain DP4)</name>
    <name type="common">Desulfovibrio vulgaris</name>
    <dbReference type="NCBI Taxonomy" id="391774"/>
    <lineage>
        <taxon>Bacteria</taxon>
        <taxon>Pseudomonadati</taxon>
        <taxon>Thermodesulfobacteriota</taxon>
        <taxon>Desulfovibrionia</taxon>
        <taxon>Desulfovibrionales</taxon>
        <taxon>Desulfovibrionaceae</taxon>
        <taxon>Nitratidesulfovibrio</taxon>
    </lineage>
</organism>
<name>CLPS_NITV4</name>
<reference key="1">
    <citation type="journal article" date="2009" name="Environ. Microbiol.">
        <title>Contribution of mobile genetic elements to Desulfovibrio vulgaris genome plasticity.</title>
        <authorList>
            <person name="Walker C.B."/>
            <person name="Stolyar S."/>
            <person name="Chivian D."/>
            <person name="Pinel N."/>
            <person name="Gabster J.A."/>
            <person name="Dehal P.S."/>
            <person name="He Z."/>
            <person name="Yang Z.K."/>
            <person name="Yen H.C."/>
            <person name="Zhou J."/>
            <person name="Wall J.D."/>
            <person name="Hazen T.C."/>
            <person name="Arkin A.P."/>
            <person name="Stahl D.A."/>
        </authorList>
    </citation>
    <scope>NUCLEOTIDE SEQUENCE [LARGE SCALE GENOMIC DNA]</scope>
    <source>
        <strain>DP4</strain>
    </source>
</reference>
<evidence type="ECO:0000255" key="1">
    <source>
        <dbReference type="HAMAP-Rule" id="MF_00302"/>
    </source>
</evidence>
<proteinExistence type="inferred from homology"/>
<comment type="function">
    <text evidence="1">Involved in the modulation of the specificity of the ClpAP-mediated ATP-dependent protein degradation.</text>
</comment>
<comment type="subunit">
    <text evidence="1">Binds to the N-terminal domain of the chaperone ClpA.</text>
</comment>
<comment type="similarity">
    <text evidence="1">Belongs to the ClpS family.</text>
</comment>
<gene>
    <name evidence="1" type="primary">clpS</name>
    <name type="ordered locus">Dvul_1533</name>
</gene>
<dbReference type="EMBL" id="CP000527">
    <property type="protein sequence ID" value="ABM28550.1"/>
    <property type="molecule type" value="Genomic_DNA"/>
</dbReference>
<dbReference type="RefSeq" id="WP_010938892.1">
    <property type="nucleotide sequence ID" value="NC_008751.1"/>
</dbReference>
<dbReference type="SMR" id="A1VDN4"/>
<dbReference type="KEGG" id="dvl:Dvul_1533"/>
<dbReference type="HOGENOM" id="CLU_134358_1_0_7"/>
<dbReference type="Proteomes" id="UP000009173">
    <property type="component" value="Chromosome"/>
</dbReference>
<dbReference type="GO" id="GO:0030163">
    <property type="term" value="P:protein catabolic process"/>
    <property type="evidence" value="ECO:0007669"/>
    <property type="project" value="InterPro"/>
</dbReference>
<dbReference type="GO" id="GO:0006508">
    <property type="term" value="P:proteolysis"/>
    <property type="evidence" value="ECO:0007669"/>
    <property type="project" value="UniProtKB-UniRule"/>
</dbReference>
<dbReference type="FunFam" id="3.30.1390.10:FF:000002">
    <property type="entry name" value="ATP-dependent Clp protease adapter protein ClpS"/>
    <property type="match status" value="1"/>
</dbReference>
<dbReference type="Gene3D" id="3.30.1390.10">
    <property type="match status" value="1"/>
</dbReference>
<dbReference type="HAMAP" id="MF_00302">
    <property type="entry name" value="ClpS"/>
    <property type="match status" value="1"/>
</dbReference>
<dbReference type="InterPro" id="IPR022935">
    <property type="entry name" value="ClpS"/>
</dbReference>
<dbReference type="InterPro" id="IPR003769">
    <property type="entry name" value="ClpS_core"/>
</dbReference>
<dbReference type="InterPro" id="IPR014719">
    <property type="entry name" value="Ribosomal_bL12_C/ClpS-like"/>
</dbReference>
<dbReference type="PANTHER" id="PTHR33473:SF19">
    <property type="entry name" value="ATP-DEPENDENT CLP PROTEASE ADAPTER PROTEIN CLPS"/>
    <property type="match status" value="1"/>
</dbReference>
<dbReference type="PANTHER" id="PTHR33473">
    <property type="entry name" value="ATP-DEPENDENT CLP PROTEASE ADAPTER PROTEIN CLPS1, CHLOROPLASTIC"/>
    <property type="match status" value="1"/>
</dbReference>
<dbReference type="Pfam" id="PF02617">
    <property type="entry name" value="ClpS"/>
    <property type="match status" value="1"/>
</dbReference>
<dbReference type="SUPFAM" id="SSF54736">
    <property type="entry name" value="ClpS-like"/>
    <property type="match status" value="1"/>
</dbReference>
<protein>
    <recommendedName>
        <fullName evidence="1">ATP-dependent Clp protease adapter protein ClpS</fullName>
    </recommendedName>
</protein>